<protein>
    <recommendedName>
        <fullName>Biogenesis of lysosome-related organelles complex 1 subunit KXD1</fullName>
        <shortName>BLOC-1 subunit KXD1</shortName>
    </recommendedName>
    <alternativeName>
        <fullName>KxDL homolog</fullName>
    </alternativeName>
</protein>
<accession>Q6CMK9</accession>
<sequence length="178" mass="20217">MDEHRSRTPSIDSRNYAIPEADYLPAGIDIDRNGVSESDDSSDDDAQSSLFPTESSGTLWMNQIQDTPMFDSSKFLFESVNNAINDIDFSESLAIQAKTSALINSKSRELKGLIKQLQEKVDYYNERFKRGAVVSSQLKVNLQMLSKRIATLDDLFSKQFPIEYNQSKEKVMERTLND</sequence>
<reference key="1">
    <citation type="journal article" date="2004" name="Nature">
        <title>Genome evolution in yeasts.</title>
        <authorList>
            <person name="Dujon B."/>
            <person name="Sherman D."/>
            <person name="Fischer G."/>
            <person name="Durrens P."/>
            <person name="Casaregola S."/>
            <person name="Lafontaine I."/>
            <person name="de Montigny J."/>
            <person name="Marck C."/>
            <person name="Neuveglise C."/>
            <person name="Talla E."/>
            <person name="Goffard N."/>
            <person name="Frangeul L."/>
            <person name="Aigle M."/>
            <person name="Anthouard V."/>
            <person name="Babour A."/>
            <person name="Barbe V."/>
            <person name="Barnay S."/>
            <person name="Blanchin S."/>
            <person name="Beckerich J.-M."/>
            <person name="Beyne E."/>
            <person name="Bleykasten C."/>
            <person name="Boisrame A."/>
            <person name="Boyer J."/>
            <person name="Cattolico L."/>
            <person name="Confanioleri F."/>
            <person name="de Daruvar A."/>
            <person name="Despons L."/>
            <person name="Fabre E."/>
            <person name="Fairhead C."/>
            <person name="Ferry-Dumazet H."/>
            <person name="Groppi A."/>
            <person name="Hantraye F."/>
            <person name="Hennequin C."/>
            <person name="Jauniaux N."/>
            <person name="Joyet P."/>
            <person name="Kachouri R."/>
            <person name="Kerrest A."/>
            <person name="Koszul R."/>
            <person name="Lemaire M."/>
            <person name="Lesur I."/>
            <person name="Ma L."/>
            <person name="Muller H."/>
            <person name="Nicaud J.-M."/>
            <person name="Nikolski M."/>
            <person name="Oztas S."/>
            <person name="Ozier-Kalogeropoulos O."/>
            <person name="Pellenz S."/>
            <person name="Potier S."/>
            <person name="Richard G.-F."/>
            <person name="Straub M.-L."/>
            <person name="Suleau A."/>
            <person name="Swennen D."/>
            <person name="Tekaia F."/>
            <person name="Wesolowski-Louvel M."/>
            <person name="Westhof E."/>
            <person name="Wirth B."/>
            <person name="Zeniou-Meyer M."/>
            <person name="Zivanovic Y."/>
            <person name="Bolotin-Fukuhara M."/>
            <person name="Thierry A."/>
            <person name="Bouchier C."/>
            <person name="Caudron B."/>
            <person name="Scarpelli C."/>
            <person name="Gaillardin C."/>
            <person name="Weissenbach J."/>
            <person name="Wincker P."/>
            <person name="Souciet J.-L."/>
        </authorList>
    </citation>
    <scope>NUCLEOTIDE SEQUENCE [LARGE SCALE GENOMIC DNA]</scope>
    <source>
        <strain>ATCC 8585 / CBS 2359 / DSM 70799 / NBRC 1267 / NRRL Y-1140 / WM37</strain>
    </source>
</reference>
<proteinExistence type="inferred from homology"/>
<dbReference type="EMBL" id="CR382125">
    <property type="protein sequence ID" value="CAG99917.1"/>
    <property type="molecule type" value="Genomic_DNA"/>
</dbReference>
<dbReference type="RefSeq" id="XP_454830.1">
    <property type="nucleotide sequence ID" value="XM_454830.1"/>
</dbReference>
<dbReference type="SMR" id="Q6CMK9"/>
<dbReference type="FunCoup" id="Q6CMK9">
    <property type="interactions" value="105"/>
</dbReference>
<dbReference type="STRING" id="284590.Q6CMK9"/>
<dbReference type="PaxDb" id="284590-Q6CMK9"/>
<dbReference type="KEGG" id="kla:KLLA0_E19427g"/>
<dbReference type="eggNOG" id="ENOG502S1H5">
    <property type="taxonomic scope" value="Eukaryota"/>
</dbReference>
<dbReference type="HOGENOM" id="CLU_099155_0_0_1"/>
<dbReference type="InParanoid" id="Q6CMK9"/>
<dbReference type="OMA" id="TPMFDTS"/>
<dbReference type="Proteomes" id="UP000000598">
    <property type="component" value="Chromosome E"/>
</dbReference>
<dbReference type="GO" id="GO:0031083">
    <property type="term" value="C:BLOC-1 complex"/>
    <property type="evidence" value="ECO:0007669"/>
    <property type="project" value="TreeGrafter"/>
</dbReference>
<dbReference type="GO" id="GO:0005768">
    <property type="term" value="C:endosome"/>
    <property type="evidence" value="ECO:0007669"/>
    <property type="project" value="UniProtKB-SubCell"/>
</dbReference>
<dbReference type="GO" id="GO:0007032">
    <property type="term" value="P:endosome organization"/>
    <property type="evidence" value="ECO:0007669"/>
    <property type="project" value="TreeGrafter"/>
</dbReference>
<dbReference type="GO" id="GO:0032880">
    <property type="term" value="P:regulation of protein localization"/>
    <property type="evidence" value="ECO:0007669"/>
    <property type="project" value="TreeGrafter"/>
</dbReference>
<dbReference type="InterPro" id="IPR051390">
    <property type="entry name" value="BLOC-1_subunit_KXD1"/>
</dbReference>
<dbReference type="InterPro" id="IPR019371">
    <property type="entry name" value="KxDL_dom"/>
</dbReference>
<dbReference type="PANTHER" id="PTHR37787">
    <property type="entry name" value="BIOGENESIS OF LYSOSOME-RELATED ORGANELLES COMPLEX 1 SUBUNIT KXD1"/>
    <property type="match status" value="1"/>
</dbReference>
<dbReference type="PANTHER" id="PTHR37787:SF1">
    <property type="entry name" value="BIOGENESIS OF LYSOSOME-RELATED ORGANELLES COMPLEX 1 SUBUNIT KXD1"/>
    <property type="match status" value="1"/>
</dbReference>
<dbReference type="Pfam" id="PF10241">
    <property type="entry name" value="KxDL"/>
    <property type="match status" value="1"/>
</dbReference>
<feature type="chain" id="PRO_0000410668" description="Biogenesis of lysosome-related organelles complex 1 subunit KXD1">
    <location>
        <begin position="1"/>
        <end position="178"/>
    </location>
</feature>
<feature type="region of interest" description="Disordered" evidence="3">
    <location>
        <begin position="28"/>
        <end position="53"/>
    </location>
</feature>
<feature type="coiled-coil region" evidence="2">
    <location>
        <begin position="101"/>
        <end position="130"/>
    </location>
</feature>
<feature type="compositionally biased region" description="Acidic residues" evidence="3">
    <location>
        <begin position="37"/>
        <end position="46"/>
    </location>
</feature>
<comment type="function">
    <text evidence="1">Component of the biogenesis of lysosome-related organelles complex-1 (BLOC-1) involved in endosomal cargo sorting.</text>
</comment>
<comment type="subunit">
    <text evidence="1">Component of the biogenesis of lysosome-related organelles complex-1 (BLOC-1).</text>
</comment>
<comment type="subcellular location">
    <subcellularLocation>
        <location evidence="1">Endosome</location>
    </subcellularLocation>
</comment>
<comment type="similarity">
    <text evidence="4">Belongs to the KXD1 family.</text>
</comment>
<evidence type="ECO:0000250" key="1"/>
<evidence type="ECO:0000255" key="2"/>
<evidence type="ECO:0000256" key="3">
    <source>
        <dbReference type="SAM" id="MobiDB-lite"/>
    </source>
</evidence>
<evidence type="ECO:0000305" key="4"/>
<name>KXD1_KLULA</name>
<gene>
    <name type="primary">KXD1</name>
    <name type="ordered locus">KLLA0E19427g</name>
</gene>
<organism>
    <name type="scientific">Kluyveromyces lactis (strain ATCC 8585 / CBS 2359 / DSM 70799 / NBRC 1267 / NRRL Y-1140 / WM37)</name>
    <name type="common">Yeast</name>
    <name type="synonym">Candida sphaerica</name>
    <dbReference type="NCBI Taxonomy" id="284590"/>
    <lineage>
        <taxon>Eukaryota</taxon>
        <taxon>Fungi</taxon>
        <taxon>Dikarya</taxon>
        <taxon>Ascomycota</taxon>
        <taxon>Saccharomycotina</taxon>
        <taxon>Saccharomycetes</taxon>
        <taxon>Saccharomycetales</taxon>
        <taxon>Saccharomycetaceae</taxon>
        <taxon>Kluyveromyces</taxon>
    </lineage>
</organism>
<keyword id="KW-0175">Coiled coil</keyword>
<keyword id="KW-0967">Endosome</keyword>
<keyword id="KW-1185">Reference proteome</keyword>
<keyword id="KW-0813">Transport</keyword>